<name>GSA_PELTS</name>
<sequence length="434" mass="46033">MYKGFDRSVSLYRQACKVIPGGVNSPVRAFKAVGLNPVFVKKGEGARIYDFDDNEYIDYVCSWGPLILGHRHPRVVGALERCLNEVGTSFGAPTELENILAEMIVEAVPSIEMVRLVNSGTEAAMSALRLARGYTGRNKIVKFEGCYHGHADFLLIKAGSGALTFGVPTSPGIPAAAAAGTIVARYNDLAGLEEIFKLEGEDIAAVIVEPVAGNMGVVPPAPGFLEGLRNLTARYGSLLIFDEVITGFRLAYGGAQELYGVAPDLTCLGKVIGGGLPVGAYGGRREIMEQVAPSGPVYQAGTLSGNPLAVSAGIATLEVLKQPGVYGRLEQTAAALEDALKQAARQTGAEVCFNRAGSMLCAFFTGEEVKDYASACTSDTARYAAFFRSMLEQGVYLAPSQFEAAFVSLAHGKEEIERTAEAARHAFKAAVEQK</sequence>
<proteinExistence type="inferred from homology"/>
<feature type="chain" id="PRO_1000079927" description="Glutamate-1-semialdehyde 2,1-aminomutase">
    <location>
        <begin position="1"/>
        <end position="434"/>
    </location>
</feature>
<feature type="modified residue" description="N6-(pyridoxal phosphate)lysine" evidence="1">
    <location>
        <position position="270"/>
    </location>
</feature>
<keyword id="KW-0963">Cytoplasm</keyword>
<keyword id="KW-0413">Isomerase</keyword>
<keyword id="KW-0627">Porphyrin biosynthesis</keyword>
<keyword id="KW-0663">Pyridoxal phosphate</keyword>
<keyword id="KW-1185">Reference proteome</keyword>
<comment type="catalytic activity">
    <reaction evidence="1">
        <text>(S)-4-amino-5-oxopentanoate = 5-aminolevulinate</text>
        <dbReference type="Rhea" id="RHEA:14265"/>
        <dbReference type="ChEBI" id="CHEBI:57501"/>
        <dbReference type="ChEBI" id="CHEBI:356416"/>
        <dbReference type="EC" id="5.4.3.8"/>
    </reaction>
</comment>
<comment type="cofactor">
    <cofactor evidence="1">
        <name>pyridoxal 5'-phosphate</name>
        <dbReference type="ChEBI" id="CHEBI:597326"/>
    </cofactor>
</comment>
<comment type="pathway">
    <text evidence="1">Porphyrin-containing compound metabolism; protoporphyrin-IX biosynthesis; 5-aminolevulinate from L-glutamyl-tRNA(Glu): step 2/2.</text>
</comment>
<comment type="subunit">
    <text evidence="1">Homodimer.</text>
</comment>
<comment type="subcellular location">
    <subcellularLocation>
        <location evidence="1">Cytoplasm</location>
    </subcellularLocation>
</comment>
<comment type="similarity">
    <text evidence="1">Belongs to the class-III pyridoxal-phosphate-dependent aminotransferase family. HemL subfamily.</text>
</comment>
<dbReference type="EC" id="5.4.3.8" evidence="1"/>
<dbReference type="EMBL" id="AP009389">
    <property type="protein sequence ID" value="BAF59160.1"/>
    <property type="molecule type" value="Genomic_DNA"/>
</dbReference>
<dbReference type="SMR" id="A5D3M2"/>
<dbReference type="STRING" id="370438.PTH_0979"/>
<dbReference type="KEGG" id="pth:PTH_0979"/>
<dbReference type="eggNOG" id="COG0001">
    <property type="taxonomic scope" value="Bacteria"/>
</dbReference>
<dbReference type="HOGENOM" id="CLU_016922_1_5_9"/>
<dbReference type="UniPathway" id="UPA00251">
    <property type="reaction ID" value="UER00317"/>
</dbReference>
<dbReference type="Proteomes" id="UP000006556">
    <property type="component" value="Chromosome"/>
</dbReference>
<dbReference type="GO" id="GO:0005737">
    <property type="term" value="C:cytoplasm"/>
    <property type="evidence" value="ECO:0007669"/>
    <property type="project" value="UniProtKB-SubCell"/>
</dbReference>
<dbReference type="GO" id="GO:0042286">
    <property type="term" value="F:glutamate-1-semialdehyde 2,1-aminomutase activity"/>
    <property type="evidence" value="ECO:0007669"/>
    <property type="project" value="UniProtKB-UniRule"/>
</dbReference>
<dbReference type="GO" id="GO:0030170">
    <property type="term" value="F:pyridoxal phosphate binding"/>
    <property type="evidence" value="ECO:0007669"/>
    <property type="project" value="InterPro"/>
</dbReference>
<dbReference type="GO" id="GO:0008483">
    <property type="term" value="F:transaminase activity"/>
    <property type="evidence" value="ECO:0007669"/>
    <property type="project" value="InterPro"/>
</dbReference>
<dbReference type="GO" id="GO:0006782">
    <property type="term" value="P:protoporphyrinogen IX biosynthetic process"/>
    <property type="evidence" value="ECO:0007669"/>
    <property type="project" value="UniProtKB-UniRule"/>
</dbReference>
<dbReference type="CDD" id="cd00610">
    <property type="entry name" value="OAT_like"/>
    <property type="match status" value="1"/>
</dbReference>
<dbReference type="FunFam" id="3.40.640.10:FF:000021">
    <property type="entry name" value="Glutamate-1-semialdehyde 2,1-aminomutase"/>
    <property type="match status" value="1"/>
</dbReference>
<dbReference type="Gene3D" id="3.90.1150.10">
    <property type="entry name" value="Aspartate Aminotransferase, domain 1"/>
    <property type="match status" value="1"/>
</dbReference>
<dbReference type="Gene3D" id="3.40.640.10">
    <property type="entry name" value="Type I PLP-dependent aspartate aminotransferase-like (Major domain)"/>
    <property type="match status" value="1"/>
</dbReference>
<dbReference type="HAMAP" id="MF_00375">
    <property type="entry name" value="HemL_aminotrans_3"/>
    <property type="match status" value="1"/>
</dbReference>
<dbReference type="InterPro" id="IPR004639">
    <property type="entry name" value="4pyrrol_synth_GluAld_NH2Trfase"/>
</dbReference>
<dbReference type="InterPro" id="IPR005814">
    <property type="entry name" value="Aminotrans_3"/>
</dbReference>
<dbReference type="InterPro" id="IPR049704">
    <property type="entry name" value="Aminotrans_3_PPA_site"/>
</dbReference>
<dbReference type="InterPro" id="IPR015424">
    <property type="entry name" value="PyrdxlP-dep_Trfase"/>
</dbReference>
<dbReference type="InterPro" id="IPR015421">
    <property type="entry name" value="PyrdxlP-dep_Trfase_major"/>
</dbReference>
<dbReference type="InterPro" id="IPR015422">
    <property type="entry name" value="PyrdxlP-dep_Trfase_small"/>
</dbReference>
<dbReference type="NCBIfam" id="TIGR00713">
    <property type="entry name" value="hemL"/>
    <property type="match status" value="1"/>
</dbReference>
<dbReference type="NCBIfam" id="NF000818">
    <property type="entry name" value="PRK00062.1"/>
    <property type="match status" value="1"/>
</dbReference>
<dbReference type="PANTHER" id="PTHR43713">
    <property type="entry name" value="GLUTAMATE-1-SEMIALDEHYDE 2,1-AMINOMUTASE"/>
    <property type="match status" value="1"/>
</dbReference>
<dbReference type="PANTHER" id="PTHR43713:SF3">
    <property type="entry name" value="GLUTAMATE-1-SEMIALDEHYDE 2,1-AMINOMUTASE 1, CHLOROPLASTIC-RELATED"/>
    <property type="match status" value="1"/>
</dbReference>
<dbReference type="Pfam" id="PF00202">
    <property type="entry name" value="Aminotran_3"/>
    <property type="match status" value="1"/>
</dbReference>
<dbReference type="SUPFAM" id="SSF53383">
    <property type="entry name" value="PLP-dependent transferases"/>
    <property type="match status" value="1"/>
</dbReference>
<dbReference type="PROSITE" id="PS00600">
    <property type="entry name" value="AA_TRANSFER_CLASS_3"/>
    <property type="match status" value="1"/>
</dbReference>
<protein>
    <recommendedName>
        <fullName evidence="1">Glutamate-1-semialdehyde 2,1-aminomutase</fullName>
        <shortName evidence="1">GSA</shortName>
        <ecNumber evidence="1">5.4.3.8</ecNumber>
    </recommendedName>
    <alternativeName>
        <fullName evidence="1">Glutamate-1-semialdehyde aminotransferase</fullName>
        <shortName evidence="1">GSA-AT</shortName>
    </alternativeName>
</protein>
<organism>
    <name type="scientific">Pelotomaculum thermopropionicum (strain DSM 13744 / JCM 10971 / SI)</name>
    <dbReference type="NCBI Taxonomy" id="370438"/>
    <lineage>
        <taxon>Bacteria</taxon>
        <taxon>Bacillati</taxon>
        <taxon>Bacillota</taxon>
        <taxon>Clostridia</taxon>
        <taxon>Eubacteriales</taxon>
        <taxon>Desulfotomaculaceae</taxon>
        <taxon>Pelotomaculum</taxon>
    </lineage>
</organism>
<reference key="1">
    <citation type="journal article" date="2008" name="Genome Res.">
        <title>The genome of Pelotomaculum thermopropionicum reveals niche-associated evolution in anaerobic microbiota.</title>
        <authorList>
            <person name="Kosaka T."/>
            <person name="Kato S."/>
            <person name="Shimoyama T."/>
            <person name="Ishii S."/>
            <person name="Abe T."/>
            <person name="Watanabe K."/>
        </authorList>
    </citation>
    <scope>NUCLEOTIDE SEQUENCE [LARGE SCALE GENOMIC DNA]</scope>
    <source>
        <strain>DSM 13744 / JCM 10971 / SI</strain>
    </source>
</reference>
<evidence type="ECO:0000255" key="1">
    <source>
        <dbReference type="HAMAP-Rule" id="MF_00375"/>
    </source>
</evidence>
<gene>
    <name evidence="1" type="primary">hemL</name>
    <name type="ordered locus">PTH_0979</name>
</gene>
<accession>A5D3M2</accession>